<organism>
    <name type="scientific">Bacillus cytotoxicus (strain DSM 22905 / CIP 110041 / 391-98 / NVH 391-98)</name>
    <dbReference type="NCBI Taxonomy" id="315749"/>
    <lineage>
        <taxon>Bacteria</taxon>
        <taxon>Bacillati</taxon>
        <taxon>Bacillota</taxon>
        <taxon>Bacilli</taxon>
        <taxon>Bacillales</taxon>
        <taxon>Bacillaceae</taxon>
        <taxon>Bacillus</taxon>
        <taxon>Bacillus cereus group</taxon>
    </lineage>
</organism>
<protein>
    <recommendedName>
        <fullName evidence="1">Protein GrpE</fullName>
    </recommendedName>
    <alternativeName>
        <fullName evidence="1">HSP-70 cofactor</fullName>
    </alternativeName>
</protein>
<sequence>MEERNEQVVEETKEAQTEEATIEKNSEESVTEEATEETVVEEKSEAALLQEKVDELQAKLTETEGRMLRLQADFENYKRRVQLDKQAAEKYRAQSLVSDILPALDNFERAMQVEASDEQTKSLLQGMEMVYRQLLEALNKEGVEMIEAVGKQFDPHEHQAVMQVEDSEFESNAVVEEFQKGYKLKDRVIRPSMVKVNQ</sequence>
<evidence type="ECO:0000255" key="1">
    <source>
        <dbReference type="HAMAP-Rule" id="MF_01151"/>
    </source>
</evidence>
<evidence type="ECO:0000256" key="2">
    <source>
        <dbReference type="SAM" id="MobiDB-lite"/>
    </source>
</evidence>
<reference key="1">
    <citation type="journal article" date="2008" name="Chem. Biol. Interact.">
        <title>Extending the Bacillus cereus group genomics to putative food-borne pathogens of different toxicity.</title>
        <authorList>
            <person name="Lapidus A."/>
            <person name="Goltsman E."/>
            <person name="Auger S."/>
            <person name="Galleron N."/>
            <person name="Segurens B."/>
            <person name="Dossat C."/>
            <person name="Land M.L."/>
            <person name="Broussolle V."/>
            <person name="Brillard J."/>
            <person name="Guinebretiere M.-H."/>
            <person name="Sanchis V."/>
            <person name="Nguen-the C."/>
            <person name="Lereclus D."/>
            <person name="Richardson P."/>
            <person name="Wincker P."/>
            <person name="Weissenbach J."/>
            <person name="Ehrlich S.D."/>
            <person name="Sorokin A."/>
        </authorList>
    </citation>
    <scope>NUCLEOTIDE SEQUENCE [LARGE SCALE GENOMIC DNA]</scope>
    <source>
        <strain>DSM 22905 / CIP 110041 / 391-98 / NVH 391-98</strain>
    </source>
</reference>
<accession>A7GT09</accession>
<name>GRPE_BACCN</name>
<feature type="chain" id="PRO_1000085105" description="Protein GrpE">
    <location>
        <begin position="1"/>
        <end position="198"/>
    </location>
</feature>
<feature type="region of interest" description="Disordered" evidence="2">
    <location>
        <begin position="1"/>
        <end position="39"/>
    </location>
</feature>
<feature type="compositionally biased region" description="Basic and acidic residues" evidence="2">
    <location>
        <begin position="1"/>
        <end position="27"/>
    </location>
</feature>
<feature type="compositionally biased region" description="Acidic residues" evidence="2">
    <location>
        <begin position="29"/>
        <end position="39"/>
    </location>
</feature>
<gene>
    <name evidence="1" type="primary">grpE</name>
    <name type="ordered locus">Bcer98_3041</name>
</gene>
<proteinExistence type="inferred from homology"/>
<dbReference type="EMBL" id="CP000764">
    <property type="protein sequence ID" value="ABS23267.1"/>
    <property type="molecule type" value="Genomic_DNA"/>
</dbReference>
<dbReference type="RefSeq" id="WP_012095504.1">
    <property type="nucleotide sequence ID" value="NC_009674.1"/>
</dbReference>
<dbReference type="SMR" id="A7GT09"/>
<dbReference type="STRING" id="315749.Bcer98_3041"/>
<dbReference type="GeneID" id="33898287"/>
<dbReference type="KEGG" id="bcy:Bcer98_3041"/>
<dbReference type="eggNOG" id="COG0576">
    <property type="taxonomic scope" value="Bacteria"/>
</dbReference>
<dbReference type="HOGENOM" id="CLU_057217_5_2_9"/>
<dbReference type="OrthoDB" id="9812586at2"/>
<dbReference type="Proteomes" id="UP000002300">
    <property type="component" value="Chromosome"/>
</dbReference>
<dbReference type="GO" id="GO:0005737">
    <property type="term" value="C:cytoplasm"/>
    <property type="evidence" value="ECO:0007669"/>
    <property type="project" value="UniProtKB-SubCell"/>
</dbReference>
<dbReference type="GO" id="GO:0000774">
    <property type="term" value="F:adenyl-nucleotide exchange factor activity"/>
    <property type="evidence" value="ECO:0007669"/>
    <property type="project" value="InterPro"/>
</dbReference>
<dbReference type="GO" id="GO:0042803">
    <property type="term" value="F:protein homodimerization activity"/>
    <property type="evidence" value="ECO:0007669"/>
    <property type="project" value="InterPro"/>
</dbReference>
<dbReference type="GO" id="GO:0051087">
    <property type="term" value="F:protein-folding chaperone binding"/>
    <property type="evidence" value="ECO:0007669"/>
    <property type="project" value="InterPro"/>
</dbReference>
<dbReference type="GO" id="GO:0051082">
    <property type="term" value="F:unfolded protein binding"/>
    <property type="evidence" value="ECO:0007669"/>
    <property type="project" value="TreeGrafter"/>
</dbReference>
<dbReference type="GO" id="GO:0006457">
    <property type="term" value="P:protein folding"/>
    <property type="evidence" value="ECO:0007669"/>
    <property type="project" value="InterPro"/>
</dbReference>
<dbReference type="CDD" id="cd00446">
    <property type="entry name" value="GrpE"/>
    <property type="match status" value="1"/>
</dbReference>
<dbReference type="FunFam" id="2.30.22.10:FF:000001">
    <property type="entry name" value="Protein GrpE"/>
    <property type="match status" value="1"/>
</dbReference>
<dbReference type="FunFam" id="3.90.20.20:FF:000002">
    <property type="entry name" value="Protein GrpE"/>
    <property type="match status" value="1"/>
</dbReference>
<dbReference type="Gene3D" id="3.90.20.20">
    <property type="match status" value="1"/>
</dbReference>
<dbReference type="Gene3D" id="2.30.22.10">
    <property type="entry name" value="Head domain of nucleotide exchange factor GrpE"/>
    <property type="match status" value="1"/>
</dbReference>
<dbReference type="HAMAP" id="MF_01151">
    <property type="entry name" value="GrpE"/>
    <property type="match status" value="1"/>
</dbReference>
<dbReference type="InterPro" id="IPR000740">
    <property type="entry name" value="GrpE"/>
</dbReference>
<dbReference type="InterPro" id="IPR013805">
    <property type="entry name" value="GrpE_coiled_coil"/>
</dbReference>
<dbReference type="InterPro" id="IPR009012">
    <property type="entry name" value="GrpE_head"/>
</dbReference>
<dbReference type="NCBIfam" id="NF010738">
    <property type="entry name" value="PRK14140.1"/>
    <property type="match status" value="1"/>
</dbReference>
<dbReference type="PANTHER" id="PTHR21237">
    <property type="entry name" value="GRPE PROTEIN"/>
    <property type="match status" value="1"/>
</dbReference>
<dbReference type="PANTHER" id="PTHR21237:SF23">
    <property type="entry name" value="GRPE PROTEIN HOMOLOG, MITOCHONDRIAL"/>
    <property type="match status" value="1"/>
</dbReference>
<dbReference type="Pfam" id="PF01025">
    <property type="entry name" value="GrpE"/>
    <property type="match status" value="1"/>
</dbReference>
<dbReference type="PRINTS" id="PR00773">
    <property type="entry name" value="GRPEPROTEIN"/>
</dbReference>
<dbReference type="SUPFAM" id="SSF58014">
    <property type="entry name" value="Coiled-coil domain of nucleotide exchange factor GrpE"/>
    <property type="match status" value="1"/>
</dbReference>
<dbReference type="SUPFAM" id="SSF51064">
    <property type="entry name" value="Head domain of nucleotide exchange factor GrpE"/>
    <property type="match status" value="1"/>
</dbReference>
<dbReference type="PROSITE" id="PS01071">
    <property type="entry name" value="GRPE"/>
    <property type="match status" value="1"/>
</dbReference>
<keyword id="KW-0143">Chaperone</keyword>
<keyword id="KW-0963">Cytoplasm</keyword>
<keyword id="KW-0346">Stress response</keyword>
<comment type="function">
    <text evidence="1">Participates actively in the response to hyperosmotic and heat shock by preventing the aggregation of stress-denatured proteins, in association with DnaK and GrpE. It is the nucleotide exchange factor for DnaK and may function as a thermosensor. Unfolded proteins bind initially to DnaJ; upon interaction with the DnaJ-bound protein, DnaK hydrolyzes its bound ATP, resulting in the formation of a stable complex. GrpE releases ADP from DnaK; ATP binding to DnaK triggers the release of the substrate protein, thus completing the reaction cycle. Several rounds of ATP-dependent interactions between DnaJ, DnaK and GrpE are required for fully efficient folding.</text>
</comment>
<comment type="subunit">
    <text evidence="1">Homodimer.</text>
</comment>
<comment type="subcellular location">
    <subcellularLocation>
        <location evidence="1">Cytoplasm</location>
    </subcellularLocation>
</comment>
<comment type="similarity">
    <text evidence="1">Belongs to the GrpE family.</text>
</comment>